<name>BPT_BURM1</name>
<organism>
    <name type="scientific">Burkholderia multivorans (strain ATCC 17616 / 249)</name>
    <dbReference type="NCBI Taxonomy" id="395019"/>
    <lineage>
        <taxon>Bacteria</taxon>
        <taxon>Pseudomonadati</taxon>
        <taxon>Pseudomonadota</taxon>
        <taxon>Betaproteobacteria</taxon>
        <taxon>Burkholderiales</taxon>
        <taxon>Burkholderiaceae</taxon>
        <taxon>Burkholderia</taxon>
        <taxon>Burkholderia cepacia complex</taxon>
    </lineage>
</organism>
<comment type="function">
    <text evidence="1">Functions in the N-end rule pathway of protein degradation where it conjugates Leu from its aminoacyl-tRNA to the N-termini of proteins containing an N-terminal aspartate or glutamate.</text>
</comment>
<comment type="catalytic activity">
    <reaction evidence="1">
        <text>N-terminal L-glutamyl-[protein] + L-leucyl-tRNA(Leu) = N-terminal L-leucyl-L-glutamyl-[protein] + tRNA(Leu) + H(+)</text>
        <dbReference type="Rhea" id="RHEA:50412"/>
        <dbReference type="Rhea" id="RHEA-COMP:9613"/>
        <dbReference type="Rhea" id="RHEA-COMP:9622"/>
        <dbReference type="Rhea" id="RHEA-COMP:12664"/>
        <dbReference type="Rhea" id="RHEA-COMP:12668"/>
        <dbReference type="ChEBI" id="CHEBI:15378"/>
        <dbReference type="ChEBI" id="CHEBI:64721"/>
        <dbReference type="ChEBI" id="CHEBI:78442"/>
        <dbReference type="ChEBI" id="CHEBI:78494"/>
        <dbReference type="ChEBI" id="CHEBI:133041"/>
        <dbReference type="EC" id="2.3.2.29"/>
    </reaction>
</comment>
<comment type="catalytic activity">
    <reaction evidence="1">
        <text>N-terminal L-aspartyl-[protein] + L-leucyl-tRNA(Leu) = N-terminal L-leucyl-L-aspartyl-[protein] + tRNA(Leu) + H(+)</text>
        <dbReference type="Rhea" id="RHEA:50420"/>
        <dbReference type="Rhea" id="RHEA-COMP:9613"/>
        <dbReference type="Rhea" id="RHEA-COMP:9622"/>
        <dbReference type="Rhea" id="RHEA-COMP:12669"/>
        <dbReference type="Rhea" id="RHEA-COMP:12674"/>
        <dbReference type="ChEBI" id="CHEBI:15378"/>
        <dbReference type="ChEBI" id="CHEBI:64720"/>
        <dbReference type="ChEBI" id="CHEBI:78442"/>
        <dbReference type="ChEBI" id="CHEBI:78494"/>
        <dbReference type="ChEBI" id="CHEBI:133042"/>
        <dbReference type="EC" id="2.3.2.29"/>
    </reaction>
</comment>
<comment type="subcellular location">
    <subcellularLocation>
        <location evidence="1">Cytoplasm</location>
    </subcellularLocation>
</comment>
<comment type="similarity">
    <text evidence="1">Belongs to the R-transferase family. Bpt subfamily.</text>
</comment>
<gene>
    <name evidence="1" type="primary">bpt</name>
    <name type="ordered locus">Bmul_1677</name>
    <name type="ordered locus">BMULJ_01566</name>
</gene>
<dbReference type="EC" id="2.3.2.29" evidence="1"/>
<dbReference type="EMBL" id="CP000868">
    <property type="protein sequence ID" value="ABX15365.1"/>
    <property type="molecule type" value="Genomic_DNA"/>
</dbReference>
<dbReference type="EMBL" id="AP009385">
    <property type="protein sequence ID" value="BAG43492.1"/>
    <property type="molecule type" value="Genomic_DNA"/>
</dbReference>
<dbReference type="RefSeq" id="WP_006400199.1">
    <property type="nucleotide sequence ID" value="NC_010804.1"/>
</dbReference>
<dbReference type="SMR" id="A9AJX3"/>
<dbReference type="STRING" id="395019.BMULJ_01566"/>
<dbReference type="KEGG" id="bmj:BMULJ_01566"/>
<dbReference type="KEGG" id="bmu:Bmul_1677"/>
<dbReference type="eggNOG" id="COG2935">
    <property type="taxonomic scope" value="Bacteria"/>
</dbReference>
<dbReference type="HOGENOM" id="CLU_077607_0_0_4"/>
<dbReference type="Proteomes" id="UP000008815">
    <property type="component" value="Chromosome 1"/>
</dbReference>
<dbReference type="GO" id="GO:0005737">
    <property type="term" value="C:cytoplasm"/>
    <property type="evidence" value="ECO:0007669"/>
    <property type="project" value="UniProtKB-SubCell"/>
</dbReference>
<dbReference type="GO" id="GO:0004057">
    <property type="term" value="F:arginyl-tRNA--protein transferase activity"/>
    <property type="evidence" value="ECO:0007669"/>
    <property type="project" value="InterPro"/>
</dbReference>
<dbReference type="GO" id="GO:0008914">
    <property type="term" value="F:leucyl-tRNA--protein transferase activity"/>
    <property type="evidence" value="ECO:0007669"/>
    <property type="project" value="UniProtKB-UniRule"/>
</dbReference>
<dbReference type="GO" id="GO:0071596">
    <property type="term" value="P:ubiquitin-dependent protein catabolic process via the N-end rule pathway"/>
    <property type="evidence" value="ECO:0007669"/>
    <property type="project" value="InterPro"/>
</dbReference>
<dbReference type="HAMAP" id="MF_00689">
    <property type="entry name" value="Bpt"/>
    <property type="match status" value="1"/>
</dbReference>
<dbReference type="InterPro" id="IPR016181">
    <property type="entry name" value="Acyl_CoA_acyltransferase"/>
</dbReference>
<dbReference type="InterPro" id="IPR017138">
    <property type="entry name" value="Asp_Glu_LeuTrfase"/>
</dbReference>
<dbReference type="InterPro" id="IPR030700">
    <property type="entry name" value="N-end_Aminoacyl_Trfase"/>
</dbReference>
<dbReference type="InterPro" id="IPR007472">
    <property type="entry name" value="N-end_Aminoacyl_Trfase_C"/>
</dbReference>
<dbReference type="InterPro" id="IPR007471">
    <property type="entry name" value="N-end_Aminoacyl_Trfase_N"/>
</dbReference>
<dbReference type="NCBIfam" id="NF002341">
    <property type="entry name" value="PRK01305.1-1"/>
    <property type="match status" value="1"/>
</dbReference>
<dbReference type="NCBIfam" id="NF002342">
    <property type="entry name" value="PRK01305.1-3"/>
    <property type="match status" value="1"/>
</dbReference>
<dbReference type="NCBIfam" id="NF002346">
    <property type="entry name" value="PRK01305.2-3"/>
    <property type="match status" value="1"/>
</dbReference>
<dbReference type="PANTHER" id="PTHR21367">
    <property type="entry name" value="ARGININE-TRNA-PROTEIN TRANSFERASE 1"/>
    <property type="match status" value="1"/>
</dbReference>
<dbReference type="PANTHER" id="PTHR21367:SF1">
    <property type="entry name" value="ARGINYL-TRNA--PROTEIN TRANSFERASE 1"/>
    <property type="match status" value="1"/>
</dbReference>
<dbReference type="Pfam" id="PF04377">
    <property type="entry name" value="ATE_C"/>
    <property type="match status" value="1"/>
</dbReference>
<dbReference type="Pfam" id="PF04376">
    <property type="entry name" value="ATE_N"/>
    <property type="match status" value="1"/>
</dbReference>
<dbReference type="PIRSF" id="PIRSF037208">
    <property type="entry name" value="ATE_pro_prd"/>
    <property type="match status" value="1"/>
</dbReference>
<dbReference type="SUPFAM" id="SSF55729">
    <property type="entry name" value="Acyl-CoA N-acyltransferases (Nat)"/>
    <property type="match status" value="1"/>
</dbReference>
<sequence length="276" mass="31157">MTHPTELPLSPLSALQFYATAPYPCSYLDGRIARSQVATPSHLINSDIYTELVKAGFRRSGVFTYRPYCDGCRACVPVRVPVAAFAPSRTQRRMWKRHRALVATVSPLHYDEDHYALYMRYQSARHAGGGMDRDSRDQYEQFLLQSRINSRLVEFRDPDAPDGEPGKLRMVSMIDILGDGLSSVYTFFEPDDPHTSYGTYNILWQIEQAKSLGLPYVYLGYWIRESPKMAYKANFHPLEGLIDGRWKVLDPARVDLPPVDAALARAPLPGGHTGSV</sequence>
<proteinExistence type="inferred from homology"/>
<reference key="1">
    <citation type="submission" date="2007-10" db="EMBL/GenBank/DDBJ databases">
        <title>Complete sequence of chromosome 1 of Burkholderia multivorans ATCC 17616.</title>
        <authorList>
            <person name="Copeland A."/>
            <person name="Lucas S."/>
            <person name="Lapidus A."/>
            <person name="Barry K."/>
            <person name="Glavina del Rio T."/>
            <person name="Dalin E."/>
            <person name="Tice H."/>
            <person name="Pitluck S."/>
            <person name="Chain P."/>
            <person name="Malfatti S."/>
            <person name="Shin M."/>
            <person name="Vergez L."/>
            <person name="Schmutz J."/>
            <person name="Larimer F."/>
            <person name="Land M."/>
            <person name="Hauser L."/>
            <person name="Kyrpides N."/>
            <person name="Kim E."/>
            <person name="Tiedje J."/>
            <person name="Richardson P."/>
        </authorList>
    </citation>
    <scope>NUCLEOTIDE SEQUENCE [LARGE SCALE GENOMIC DNA]</scope>
    <source>
        <strain>ATCC 17616 / 249</strain>
    </source>
</reference>
<reference key="2">
    <citation type="submission" date="2007-04" db="EMBL/GenBank/DDBJ databases">
        <title>Complete genome sequence of Burkholderia multivorans ATCC 17616.</title>
        <authorList>
            <person name="Ohtsubo Y."/>
            <person name="Yamashita A."/>
            <person name="Kurokawa K."/>
            <person name="Takami H."/>
            <person name="Yuhara S."/>
            <person name="Nishiyama E."/>
            <person name="Endo R."/>
            <person name="Miyazaki R."/>
            <person name="Ono A."/>
            <person name="Yano K."/>
            <person name="Ito M."/>
            <person name="Sota M."/>
            <person name="Yuji N."/>
            <person name="Hattori M."/>
            <person name="Tsuda M."/>
        </authorList>
    </citation>
    <scope>NUCLEOTIDE SEQUENCE [LARGE SCALE GENOMIC DNA]</scope>
    <source>
        <strain>ATCC 17616 / 249</strain>
    </source>
</reference>
<feature type="chain" id="PRO_1000131975" description="Aspartate/glutamate leucyltransferase">
    <location>
        <begin position="1"/>
        <end position="276"/>
    </location>
</feature>
<accession>A9AJX3</accession>
<protein>
    <recommendedName>
        <fullName evidence="1">Aspartate/glutamate leucyltransferase</fullName>
        <ecNumber evidence="1">2.3.2.29</ecNumber>
    </recommendedName>
</protein>
<keyword id="KW-0012">Acyltransferase</keyword>
<keyword id="KW-0963">Cytoplasm</keyword>
<keyword id="KW-1185">Reference proteome</keyword>
<keyword id="KW-0808">Transferase</keyword>
<evidence type="ECO:0000255" key="1">
    <source>
        <dbReference type="HAMAP-Rule" id="MF_00689"/>
    </source>
</evidence>